<comment type="function">
    <text evidence="1">Part of the excision complex necessary for the excision of prophage from the host genome by site-specific recombination at the att site.</text>
</comment>
<sequence length="116" mass="12755">MESHSLTLDEACAFLKISRPTATNWIRTGRLQATRKDPTKPKSPYLTTRQACIAALQSPLHTVQVSAGDDITEELKCHYSAEVKPGTPVSHCRTAKDLSSLLGQRTKGRPQSFMTS</sequence>
<evidence type="ECO:0000269" key="1">
    <source>
    </source>
</evidence>
<feature type="chain" id="PRO_0000077716" description="Excisionase">
    <location>
        <begin position="1"/>
        <end position="116"/>
    </location>
</feature>
<gene>
    <name type="primary">xis</name>
</gene>
<proteinExistence type="evidence at protein level"/>
<name>VXIS_BPP22</name>
<organism>
    <name type="scientific">Salmonella phage P22</name>
    <name type="common">Bacteriophage P22</name>
    <dbReference type="NCBI Taxonomy" id="10754"/>
    <lineage>
        <taxon>Viruses</taxon>
        <taxon>Duplodnaviria</taxon>
        <taxon>Heunggongvirae</taxon>
        <taxon>Uroviricota</taxon>
        <taxon>Caudoviricetes</taxon>
        <taxon>Lederbergvirus</taxon>
    </lineage>
</organism>
<dbReference type="EMBL" id="X04052">
    <property type="protein sequence ID" value="CAA27686.1"/>
    <property type="molecule type" value="Genomic_DNA"/>
</dbReference>
<dbReference type="EMBL" id="BK000583">
    <property type="protein sequence ID" value="DAA00999.1"/>
    <property type="molecule type" value="Genomic_DNA"/>
</dbReference>
<dbReference type="EMBL" id="AF217253">
    <property type="protein sequence ID" value="AAF75003.1"/>
    <property type="molecule type" value="Genomic_DNA"/>
</dbReference>
<dbReference type="PIR" id="D24253">
    <property type="entry name" value="RSBPXP"/>
</dbReference>
<dbReference type="RefSeq" id="NP_059585.1">
    <property type="nucleotide sequence ID" value="NC_002371.2"/>
</dbReference>
<dbReference type="SMR" id="P04889"/>
<dbReference type="GeneID" id="1262794"/>
<dbReference type="KEGG" id="vg:1262794"/>
<dbReference type="OrthoDB" id="14607at10239"/>
<dbReference type="Proteomes" id="UP000001795">
    <property type="component" value="Segment"/>
</dbReference>
<dbReference type="Proteomes" id="UP000007960">
    <property type="component" value="Segment"/>
</dbReference>
<dbReference type="GO" id="GO:0003677">
    <property type="term" value="F:DNA binding"/>
    <property type="evidence" value="ECO:0007669"/>
    <property type="project" value="UniProtKB-KW"/>
</dbReference>
<dbReference type="GO" id="GO:0006310">
    <property type="term" value="P:DNA recombination"/>
    <property type="evidence" value="ECO:0007669"/>
    <property type="project" value="UniProtKB-KW"/>
</dbReference>
<dbReference type="GO" id="GO:0032359">
    <property type="term" value="P:provirus excision"/>
    <property type="evidence" value="ECO:0007669"/>
    <property type="project" value="UniProtKB-KW"/>
</dbReference>
<dbReference type="InterPro" id="IPR041657">
    <property type="entry name" value="HTH_17"/>
</dbReference>
<dbReference type="Pfam" id="PF12728">
    <property type="entry name" value="HTH_17"/>
    <property type="match status" value="1"/>
</dbReference>
<accession>P04889</accession>
<accession>Q7PCH3</accession>
<protein>
    <recommendedName>
        <fullName>Excisionase</fullName>
    </recommendedName>
</protein>
<reference key="1">
    <citation type="journal article" date="1986" name="J. Mol. Biol.">
        <title>Structural and regulatory divergence among site-specific recombination genes of lambdoid phage.</title>
        <authorList>
            <person name="Leong J.M."/>
            <person name="Nunes-Dueby S.E."/>
            <person name="Oser A.B."/>
            <person name="Lesser C.F."/>
            <person name="Youderian P."/>
            <person name="Susskind M.M."/>
            <person name="Landy A."/>
        </authorList>
    </citation>
    <scope>NUCLEOTIDE SEQUENCE [GENOMIC DNA]</scope>
</reference>
<reference key="2">
    <citation type="journal article" date="2000" name="J. Bacteriol.">
        <title>Sequence of the genome of Salmonella bacteriophage P22.</title>
        <authorList>
            <person name="Vander Byl C.S."/>
            <person name="Kropinski A.M.B."/>
        </authorList>
    </citation>
    <scope>NUCLEOTIDE SEQUENCE [LARGE SCALE GENOMIC DNA]</scope>
</reference>
<reference key="3">
    <citation type="journal article" date="2003" name="J. Bacteriol.">
        <title>Corrected sequence of the bacteriophage P22 genome.</title>
        <authorList>
            <person name="Pedulla M.L."/>
            <person name="Ford M.E."/>
            <person name="Karthikeyan T."/>
            <person name="Houtz J.M."/>
            <person name="Hendrix R.W."/>
            <person name="Hatfull G.F."/>
            <person name="Poteete A.R."/>
            <person name="Gilcrease E.B."/>
            <person name="Winn-Stapley D.A."/>
            <person name="Casjens S.R."/>
        </authorList>
    </citation>
    <scope>NUCLEOTIDE SEQUENCE [LARGE SCALE GENOMIC DNA]</scope>
</reference>
<reference key="4">
    <citation type="journal article" date="2008" name="J. Bacteriol.">
        <title>Purification and characterization of bacteriophage P22 Xis protein.</title>
        <authorList>
            <person name="Mattis A.N."/>
            <person name="Gumport R.I."/>
            <person name="Gardner J.F."/>
        </authorList>
    </citation>
    <scope>CHARACTERIZATION</scope>
    <scope>FUNCTION</scope>
</reference>
<keyword id="KW-0233">DNA recombination</keyword>
<keyword id="KW-0238">DNA-binding</keyword>
<keyword id="KW-1185">Reference proteome</keyword>
<keyword id="KW-1250">Viral genome excision</keyword>
<organismHost>
    <name type="scientific">Salmonella typhimurium</name>
    <dbReference type="NCBI Taxonomy" id="90371"/>
</organismHost>